<accession>Q1D6I1</accession>
<protein>
    <recommendedName>
        <fullName evidence="1">Large ribosomal subunit protein bL19</fullName>
    </recommendedName>
    <alternativeName>
        <fullName evidence="2">50S ribosomal protein L19</fullName>
    </alternativeName>
</protein>
<organism>
    <name type="scientific">Myxococcus xanthus (strain DK1622)</name>
    <dbReference type="NCBI Taxonomy" id="246197"/>
    <lineage>
        <taxon>Bacteria</taxon>
        <taxon>Pseudomonadati</taxon>
        <taxon>Myxococcota</taxon>
        <taxon>Myxococcia</taxon>
        <taxon>Myxococcales</taxon>
        <taxon>Cystobacterineae</taxon>
        <taxon>Myxococcaceae</taxon>
        <taxon>Myxococcus</taxon>
    </lineage>
</organism>
<gene>
    <name evidence="1" type="primary">rplS</name>
    <name type="ordered locus">MXAN_3549</name>
</gene>
<reference key="1">
    <citation type="journal article" date="2006" name="Proc. Natl. Acad. Sci. U.S.A.">
        <title>Evolution of sensory complexity recorded in a myxobacterial genome.</title>
        <authorList>
            <person name="Goldman B.S."/>
            <person name="Nierman W.C."/>
            <person name="Kaiser D."/>
            <person name="Slater S.C."/>
            <person name="Durkin A.S."/>
            <person name="Eisen J.A."/>
            <person name="Ronning C.M."/>
            <person name="Barbazuk W.B."/>
            <person name="Blanchard M."/>
            <person name="Field C."/>
            <person name="Halling C."/>
            <person name="Hinkle G."/>
            <person name="Iartchuk O."/>
            <person name="Kim H.S."/>
            <person name="Mackenzie C."/>
            <person name="Madupu R."/>
            <person name="Miller N."/>
            <person name="Shvartsbeyn A."/>
            <person name="Sullivan S.A."/>
            <person name="Vaudin M."/>
            <person name="Wiegand R."/>
            <person name="Kaplan H.B."/>
        </authorList>
    </citation>
    <scope>NUCLEOTIDE SEQUENCE [LARGE SCALE GENOMIC DNA]</scope>
    <source>
        <strain>DK1622</strain>
    </source>
</reference>
<sequence>MRNAAIQHIEAKFLRQDVTVFNTGDSVRVHWKVKEGEKERVQAFEGIVIRKTKGNHRATFTVRKLSFGVGVERVFPLHSPRYEKIEVLSRGDVNRKRLFYLRALKGKAARVDVIEEPKPSKKAASAS</sequence>
<comment type="function">
    <text evidence="1">This protein is located at the 30S-50S ribosomal subunit interface and may play a role in the structure and function of the aminoacyl-tRNA binding site.</text>
</comment>
<comment type="similarity">
    <text evidence="1">Belongs to the bacterial ribosomal protein bL19 family.</text>
</comment>
<proteinExistence type="inferred from homology"/>
<dbReference type="EMBL" id="CP000113">
    <property type="protein sequence ID" value="ABF91840.1"/>
    <property type="molecule type" value="Genomic_DNA"/>
</dbReference>
<dbReference type="RefSeq" id="WP_011553578.1">
    <property type="nucleotide sequence ID" value="NC_008095.1"/>
</dbReference>
<dbReference type="SMR" id="Q1D6I1"/>
<dbReference type="STRING" id="246197.MXAN_3549"/>
<dbReference type="EnsemblBacteria" id="ABF91840">
    <property type="protein sequence ID" value="ABF91840"/>
    <property type="gene ID" value="MXAN_3549"/>
</dbReference>
<dbReference type="GeneID" id="41360894"/>
<dbReference type="KEGG" id="mxa:MXAN_3549"/>
<dbReference type="eggNOG" id="COG0335">
    <property type="taxonomic scope" value="Bacteria"/>
</dbReference>
<dbReference type="HOGENOM" id="CLU_103507_2_1_7"/>
<dbReference type="OrthoDB" id="9803541at2"/>
<dbReference type="Proteomes" id="UP000002402">
    <property type="component" value="Chromosome"/>
</dbReference>
<dbReference type="GO" id="GO:0022625">
    <property type="term" value="C:cytosolic large ribosomal subunit"/>
    <property type="evidence" value="ECO:0007669"/>
    <property type="project" value="TreeGrafter"/>
</dbReference>
<dbReference type="GO" id="GO:0003735">
    <property type="term" value="F:structural constituent of ribosome"/>
    <property type="evidence" value="ECO:0007669"/>
    <property type="project" value="InterPro"/>
</dbReference>
<dbReference type="GO" id="GO:0006412">
    <property type="term" value="P:translation"/>
    <property type="evidence" value="ECO:0007669"/>
    <property type="project" value="UniProtKB-UniRule"/>
</dbReference>
<dbReference type="Gene3D" id="2.30.30.790">
    <property type="match status" value="1"/>
</dbReference>
<dbReference type="HAMAP" id="MF_00402">
    <property type="entry name" value="Ribosomal_bL19"/>
    <property type="match status" value="1"/>
</dbReference>
<dbReference type="InterPro" id="IPR001857">
    <property type="entry name" value="Ribosomal_bL19"/>
</dbReference>
<dbReference type="InterPro" id="IPR018257">
    <property type="entry name" value="Ribosomal_bL19_CS"/>
</dbReference>
<dbReference type="InterPro" id="IPR038657">
    <property type="entry name" value="Ribosomal_bL19_sf"/>
</dbReference>
<dbReference type="InterPro" id="IPR008991">
    <property type="entry name" value="Translation_prot_SH3-like_sf"/>
</dbReference>
<dbReference type="NCBIfam" id="TIGR01024">
    <property type="entry name" value="rplS_bact"/>
    <property type="match status" value="1"/>
</dbReference>
<dbReference type="PANTHER" id="PTHR15680:SF9">
    <property type="entry name" value="LARGE RIBOSOMAL SUBUNIT PROTEIN BL19M"/>
    <property type="match status" value="1"/>
</dbReference>
<dbReference type="PANTHER" id="PTHR15680">
    <property type="entry name" value="RIBOSOMAL PROTEIN L19"/>
    <property type="match status" value="1"/>
</dbReference>
<dbReference type="Pfam" id="PF01245">
    <property type="entry name" value="Ribosomal_L19"/>
    <property type="match status" value="1"/>
</dbReference>
<dbReference type="PIRSF" id="PIRSF002191">
    <property type="entry name" value="Ribosomal_L19"/>
    <property type="match status" value="1"/>
</dbReference>
<dbReference type="PRINTS" id="PR00061">
    <property type="entry name" value="RIBOSOMALL19"/>
</dbReference>
<dbReference type="SUPFAM" id="SSF50104">
    <property type="entry name" value="Translation proteins SH3-like domain"/>
    <property type="match status" value="1"/>
</dbReference>
<dbReference type="PROSITE" id="PS01015">
    <property type="entry name" value="RIBOSOMAL_L19"/>
    <property type="match status" value="1"/>
</dbReference>
<name>RL19_MYXXD</name>
<keyword id="KW-1185">Reference proteome</keyword>
<keyword id="KW-0687">Ribonucleoprotein</keyword>
<keyword id="KW-0689">Ribosomal protein</keyword>
<feature type="chain" id="PRO_0000252522" description="Large ribosomal subunit protein bL19">
    <location>
        <begin position="1"/>
        <end position="127"/>
    </location>
</feature>
<evidence type="ECO:0000255" key="1">
    <source>
        <dbReference type="HAMAP-Rule" id="MF_00402"/>
    </source>
</evidence>
<evidence type="ECO:0000305" key="2"/>